<dbReference type="EC" id="1.2.1.3" evidence="4 5"/>
<dbReference type="EMBL" id="Z49705">
    <property type="protein sequence ID" value="CAA89805.1"/>
    <property type="molecule type" value="Genomic_DNA"/>
</dbReference>
<dbReference type="EMBL" id="BK006946">
    <property type="protein sequence ID" value="DAA10065.1"/>
    <property type="molecule type" value="Genomic_DNA"/>
</dbReference>
<dbReference type="PIR" id="S54527">
    <property type="entry name" value="S54527"/>
</dbReference>
<dbReference type="RefSeq" id="NP_013892.1">
    <property type="nucleotide sequence ID" value="NM_001182673.1"/>
</dbReference>
<dbReference type="SMR" id="P54114"/>
<dbReference type="BioGRID" id="35347">
    <property type="interactions" value="48"/>
</dbReference>
<dbReference type="FunCoup" id="P54114">
    <property type="interactions" value="440"/>
</dbReference>
<dbReference type="IntAct" id="P54114">
    <property type="interactions" value="2"/>
</dbReference>
<dbReference type="MINT" id="P54114"/>
<dbReference type="STRING" id="4932.YMR169C"/>
<dbReference type="iPTMnet" id="P54114"/>
<dbReference type="PaxDb" id="4932-YMR169C"/>
<dbReference type="PeptideAtlas" id="P54114"/>
<dbReference type="EnsemblFungi" id="YMR169C_mRNA">
    <property type="protein sequence ID" value="YMR169C"/>
    <property type="gene ID" value="YMR169C"/>
</dbReference>
<dbReference type="GeneID" id="855205"/>
<dbReference type="KEGG" id="sce:YMR169C"/>
<dbReference type="AGR" id="SGD:S000004779"/>
<dbReference type="SGD" id="S000004779">
    <property type="gene designation" value="ALD3"/>
</dbReference>
<dbReference type="VEuPathDB" id="FungiDB:YMR169C"/>
<dbReference type="eggNOG" id="KOG2450">
    <property type="taxonomic scope" value="Eukaryota"/>
</dbReference>
<dbReference type="GeneTree" id="ENSGT00940000176434"/>
<dbReference type="HOGENOM" id="CLU_005391_0_1_1"/>
<dbReference type="InParanoid" id="P54114"/>
<dbReference type="OMA" id="VRHVMIK"/>
<dbReference type="OrthoDB" id="310895at2759"/>
<dbReference type="BioCyc" id="MetaCyc:YMR169C-MONOMER"/>
<dbReference type="BioCyc" id="YEAST:YMR169C-MONOMER"/>
<dbReference type="BioGRID-ORCS" id="855205">
    <property type="hits" value="0 hits in 10 CRISPR screens"/>
</dbReference>
<dbReference type="CD-CODE" id="E03F929F">
    <property type="entry name" value="Stress granule"/>
</dbReference>
<dbReference type="PRO" id="PR:P54114"/>
<dbReference type="Proteomes" id="UP000002311">
    <property type="component" value="Chromosome XIII"/>
</dbReference>
<dbReference type="RNAct" id="P54114">
    <property type="molecule type" value="protein"/>
</dbReference>
<dbReference type="GO" id="GO:0005737">
    <property type="term" value="C:cytoplasm"/>
    <property type="evidence" value="ECO:0000250"/>
    <property type="project" value="SGD"/>
</dbReference>
<dbReference type="GO" id="GO:0102244">
    <property type="term" value="F:3-aminopropanal dehydrogenase (NAD+) activity"/>
    <property type="evidence" value="ECO:0007669"/>
    <property type="project" value="RHEA"/>
</dbReference>
<dbReference type="GO" id="GO:0004029">
    <property type="term" value="F:aldehyde dehydrogenase (NAD+) activity"/>
    <property type="evidence" value="ECO:0000314"/>
    <property type="project" value="SGD"/>
</dbReference>
<dbReference type="GO" id="GO:0019483">
    <property type="term" value="P:beta-alanine biosynthetic process"/>
    <property type="evidence" value="ECO:0000315"/>
    <property type="project" value="SGD"/>
</dbReference>
<dbReference type="GO" id="GO:0015940">
    <property type="term" value="P:pantothenate biosynthetic process"/>
    <property type="evidence" value="ECO:0007669"/>
    <property type="project" value="UniProtKB-KW"/>
</dbReference>
<dbReference type="GO" id="GO:0006598">
    <property type="term" value="P:polyamine catabolic process"/>
    <property type="evidence" value="ECO:0000315"/>
    <property type="project" value="SGD"/>
</dbReference>
<dbReference type="FunFam" id="3.40.605.10:FF:000001">
    <property type="entry name" value="Aldehyde dehydrogenase 1"/>
    <property type="match status" value="1"/>
</dbReference>
<dbReference type="FunFam" id="3.40.605.10:FF:000026">
    <property type="entry name" value="Aldehyde dehydrogenase, putative"/>
    <property type="match status" value="1"/>
</dbReference>
<dbReference type="FunFam" id="3.40.309.10:FF:000012">
    <property type="entry name" value="Betaine aldehyde dehydrogenase"/>
    <property type="match status" value="1"/>
</dbReference>
<dbReference type="Gene3D" id="3.40.605.10">
    <property type="entry name" value="Aldehyde Dehydrogenase, Chain A, domain 1"/>
    <property type="match status" value="1"/>
</dbReference>
<dbReference type="Gene3D" id="3.40.309.10">
    <property type="entry name" value="Aldehyde Dehydrogenase, Chain A, domain 2"/>
    <property type="match status" value="1"/>
</dbReference>
<dbReference type="InterPro" id="IPR016161">
    <property type="entry name" value="Ald_DH/histidinol_DH"/>
</dbReference>
<dbReference type="InterPro" id="IPR016163">
    <property type="entry name" value="Ald_DH_C"/>
</dbReference>
<dbReference type="InterPro" id="IPR016160">
    <property type="entry name" value="Ald_DH_CS_CYS"/>
</dbReference>
<dbReference type="InterPro" id="IPR029510">
    <property type="entry name" value="Ald_DH_CS_GLU"/>
</dbReference>
<dbReference type="InterPro" id="IPR016162">
    <property type="entry name" value="Ald_DH_N"/>
</dbReference>
<dbReference type="InterPro" id="IPR015590">
    <property type="entry name" value="Aldehyde_DH_dom"/>
</dbReference>
<dbReference type="PANTHER" id="PTHR43720">
    <property type="entry name" value="2-AMINOMUCONIC SEMIALDEHYDE DEHYDROGENASE"/>
    <property type="match status" value="1"/>
</dbReference>
<dbReference type="PANTHER" id="PTHR43720:SF2">
    <property type="entry name" value="2-AMINOMUCONIC SEMIALDEHYDE DEHYDROGENASE"/>
    <property type="match status" value="1"/>
</dbReference>
<dbReference type="Pfam" id="PF00171">
    <property type="entry name" value="Aldedh"/>
    <property type="match status" value="1"/>
</dbReference>
<dbReference type="SUPFAM" id="SSF53720">
    <property type="entry name" value="ALDH-like"/>
    <property type="match status" value="1"/>
</dbReference>
<dbReference type="PROSITE" id="PS00070">
    <property type="entry name" value="ALDEHYDE_DEHYDR_CYS"/>
    <property type="match status" value="1"/>
</dbReference>
<dbReference type="PROSITE" id="PS00687">
    <property type="entry name" value="ALDEHYDE_DEHYDR_GLU"/>
    <property type="match status" value="1"/>
</dbReference>
<feature type="chain" id="PRO_0000056440" description="Aldehyde dehydrogenase [NAD(P)+] 2">
    <location>
        <begin position="1"/>
        <end position="506"/>
    </location>
</feature>
<feature type="active site" description="Proton acceptor" evidence="2 3">
    <location>
        <position position="268"/>
    </location>
</feature>
<feature type="active site" description="Nucleophile" evidence="2 3">
    <location>
        <position position="302"/>
    </location>
</feature>
<feature type="site" description="Transition state stabilizer" evidence="1">
    <location>
        <position position="169"/>
    </location>
</feature>
<proteinExistence type="evidence at protein level"/>
<gene>
    <name type="primary">ALD3</name>
    <name type="synonym">ALD4</name>
    <name type="ordered locus">YMR169C</name>
    <name type="ORF">YM8520.18C</name>
</gene>
<sequence length="506" mass="55385">MPTLYTDIEIPQLKISLKQPLGLFINNEFCPSSDGKTIETVNPATGEPITSFQAANEKDVDKAVKAARAAFDNVWSKTSSEQRGIYLSNLLKLIEEEQDTLAALETLDAGKPFHSNAKQDLAQIIELTRYYAGAVDKFNMGETIPLTFNKFAYTLKVPFGVVAQIVPWNYPLAMACRKMQGALAAGNTVIIKPAENTSLSLLYFATLIKKAGFPPGVVNVIPGYGSVVGKALGTHMDIDKISFTGSTKVGGSVLEASGQSNLKDITLECGGKSPALVFEDADLDKAIEWVANGIFFNSGQICTANSRVYVQSSIYDKFVEKFKETAKKEWDVAGKFDPFDEKCIVGPVISSTQYDRIKSYIERGKKEEKLDMFQTSEFPIGGAKGYFIPPTIFTDVPETSKLLRDEIFGPVVVVSKFTNYDDALKLANDTCYGLASAVFTKDVKKAHMFARDIKAGTVWINQTNQEEAKVPFGGFKMSGIGRESGDTGVDNYLQIKSVHVDLSLDK</sequence>
<accession>P54114</accession>
<accession>D6VZZ1</accession>
<protein>
    <recommendedName>
        <fullName evidence="7">Aldehyde dehydrogenase [NAD(P)+] 2</fullName>
        <ecNumber evidence="4 5">1.2.1.3</ecNumber>
    </recommendedName>
</protein>
<organism>
    <name type="scientific">Saccharomyces cerevisiae (strain ATCC 204508 / S288c)</name>
    <name type="common">Baker's yeast</name>
    <dbReference type="NCBI Taxonomy" id="559292"/>
    <lineage>
        <taxon>Eukaryota</taxon>
        <taxon>Fungi</taxon>
        <taxon>Dikarya</taxon>
        <taxon>Ascomycota</taxon>
        <taxon>Saccharomycotina</taxon>
        <taxon>Saccharomycetes</taxon>
        <taxon>Saccharomycetales</taxon>
        <taxon>Saccharomycetaceae</taxon>
        <taxon>Saccharomyces</taxon>
    </lineage>
</organism>
<comment type="function">
    <text evidence="4 5">Cytoplasmic aldehyde dehydrogenase involved in ethanol oxidation. Involved in pantothenic acid production through the conversion of 3-aminopropanal to beta-alanine, an intermediate in pantothenic acid (vitamin B5) and coenzyme A (CoA) biosynthesis.</text>
</comment>
<comment type="catalytic activity">
    <reaction evidence="4 5">
        <text>an aldehyde + NAD(+) + H2O = a carboxylate + NADH + 2 H(+)</text>
        <dbReference type="Rhea" id="RHEA:16185"/>
        <dbReference type="ChEBI" id="CHEBI:15377"/>
        <dbReference type="ChEBI" id="CHEBI:15378"/>
        <dbReference type="ChEBI" id="CHEBI:17478"/>
        <dbReference type="ChEBI" id="CHEBI:29067"/>
        <dbReference type="ChEBI" id="CHEBI:57540"/>
        <dbReference type="ChEBI" id="CHEBI:57945"/>
        <dbReference type="EC" id="1.2.1.3"/>
    </reaction>
</comment>
<comment type="catalytic activity">
    <reaction evidence="4 5">
        <text>3-aminopropanal + NAD(+) + H2O = beta-alanine + NADH + 2 H(+)</text>
        <dbReference type="Rhea" id="RHEA:30695"/>
        <dbReference type="ChEBI" id="CHEBI:15377"/>
        <dbReference type="ChEBI" id="CHEBI:15378"/>
        <dbReference type="ChEBI" id="CHEBI:57540"/>
        <dbReference type="ChEBI" id="CHEBI:57945"/>
        <dbReference type="ChEBI" id="CHEBI:57966"/>
        <dbReference type="ChEBI" id="CHEBI:58374"/>
    </reaction>
    <physiologicalReaction direction="left-to-right" evidence="8">
        <dbReference type="Rhea" id="RHEA:30696"/>
    </physiologicalReaction>
</comment>
<comment type="subcellular location">
    <subcellularLocation>
        <location evidence="1">Cytoplasm</location>
    </subcellularLocation>
</comment>
<comment type="induction">
    <text evidence="4">Expression is under the control of MSN2 and MSN4, and is induced during diauxic shift and osmotic stress.</text>
</comment>
<comment type="miscellaneous">
    <text evidence="6">Present with 172 molecules/cell in log phase SD medium.</text>
</comment>
<comment type="similarity">
    <text evidence="7">Belongs to the aldehyde dehydrogenase family.</text>
</comment>
<keyword id="KW-0963">Cytoplasm</keyword>
<keyword id="KW-0520">NAD</keyword>
<keyword id="KW-0560">Oxidoreductase</keyword>
<keyword id="KW-0566">Pantothenate biosynthesis</keyword>
<keyword id="KW-1185">Reference proteome</keyword>
<evidence type="ECO:0000250" key="1"/>
<evidence type="ECO:0000255" key="2">
    <source>
        <dbReference type="PROSITE-ProRule" id="PRU10007"/>
    </source>
</evidence>
<evidence type="ECO:0000255" key="3">
    <source>
        <dbReference type="PROSITE-ProRule" id="PRU10008"/>
    </source>
</evidence>
<evidence type="ECO:0000269" key="4">
    <source>
    </source>
</evidence>
<evidence type="ECO:0000269" key="5">
    <source>
    </source>
</evidence>
<evidence type="ECO:0000269" key="6">
    <source>
    </source>
</evidence>
<evidence type="ECO:0000305" key="7"/>
<evidence type="ECO:0000305" key="8">
    <source>
    </source>
</evidence>
<name>ALDH3_YEAST</name>
<reference key="1">
    <citation type="journal article" date="1997" name="Nature">
        <title>The nucleotide sequence of Saccharomyces cerevisiae chromosome XIII.</title>
        <authorList>
            <person name="Bowman S."/>
            <person name="Churcher C.M."/>
            <person name="Badcock K."/>
            <person name="Brown D."/>
            <person name="Chillingworth T."/>
            <person name="Connor R."/>
            <person name="Dedman K."/>
            <person name="Devlin K."/>
            <person name="Gentles S."/>
            <person name="Hamlin N."/>
            <person name="Hunt S."/>
            <person name="Jagels K."/>
            <person name="Lye G."/>
            <person name="Moule S."/>
            <person name="Odell C."/>
            <person name="Pearson D."/>
            <person name="Rajandream M.A."/>
            <person name="Rice P."/>
            <person name="Skelton J."/>
            <person name="Walsh S.V."/>
            <person name="Whitehead S."/>
            <person name="Barrell B.G."/>
        </authorList>
    </citation>
    <scope>NUCLEOTIDE SEQUENCE [LARGE SCALE GENOMIC DNA]</scope>
    <source>
        <strain>ATCC 204508 / S288c</strain>
    </source>
</reference>
<reference key="2">
    <citation type="journal article" date="2014" name="G3 (Bethesda)">
        <title>The reference genome sequence of Saccharomyces cerevisiae: Then and now.</title>
        <authorList>
            <person name="Engel S.R."/>
            <person name="Dietrich F.S."/>
            <person name="Fisk D.G."/>
            <person name="Binkley G."/>
            <person name="Balakrishnan R."/>
            <person name="Costanzo M.C."/>
            <person name="Dwight S.S."/>
            <person name="Hitz B.C."/>
            <person name="Karra K."/>
            <person name="Nash R.S."/>
            <person name="Weng S."/>
            <person name="Wong E.D."/>
            <person name="Lloyd P."/>
            <person name="Skrzypek M.S."/>
            <person name="Miyasato S.R."/>
            <person name="Simison M."/>
            <person name="Cherry J.M."/>
        </authorList>
    </citation>
    <scope>GENOME REANNOTATION</scope>
    <source>
        <strain>ATCC 204508 / S288c</strain>
    </source>
</reference>
<reference key="3">
    <citation type="journal article" date="1999" name="Yeast">
        <title>A proposal for nomenclature of aldehyde dehydrogenases in Saccharomyces cerevisiae and characterization of the stress-inducible ALD2 and ALD3 genes.</title>
        <authorList>
            <person name="Navarro-Avino J.P."/>
            <person name="Prasad R."/>
            <person name="Miralles V.J."/>
            <person name="Benito R.M."/>
            <person name="Serrano R."/>
        </authorList>
    </citation>
    <scope>FUNCTION</scope>
    <scope>CATALYTIC ACTIVITY</scope>
    <scope>INDUCTION</scope>
</reference>
<reference key="4">
    <citation type="journal article" date="2003" name="Genetics">
        <title>Specialization of function among aldehyde dehydrogenases: the ALD2 and ALD3 genes are required for beta-alanine biosynthesis in Saccharomyces cerevisiae.</title>
        <authorList>
            <person name="White W.H."/>
            <person name="Skatrud P.L."/>
            <person name="Xue Z."/>
            <person name="Toyn J.H."/>
        </authorList>
    </citation>
    <scope>FUNCTION</scope>
    <scope>CATALYTIC ACTIVITY</scope>
</reference>
<reference key="5">
    <citation type="journal article" date="2003" name="Nature">
        <title>Global analysis of protein expression in yeast.</title>
        <authorList>
            <person name="Ghaemmaghami S."/>
            <person name="Huh W.-K."/>
            <person name="Bower K."/>
            <person name="Howson R.W."/>
            <person name="Belle A."/>
            <person name="Dephoure N."/>
            <person name="O'Shea E.K."/>
            <person name="Weissman J.S."/>
        </authorList>
    </citation>
    <scope>LEVEL OF PROTEIN EXPRESSION [LARGE SCALE ANALYSIS]</scope>
</reference>